<sequence length="524" mass="59493">MKPQELAKEVAKRRTFAIISHPDAGKTTITEQLLLFGGVIREAGTVKGRKSGHFAKSDWMEIEKKRGISVTSSVMQFNYQGKRINILDTPGHEDFSEDTYRTLMAVDAAVMVIDSAKGIEAQTKKLFKVVKQRGIPIFTFMNKLDRDGREPLDLIAELEDLLGIEGYAMNWPIGMGKGLKGLYDRVNQRIELYRREGDDRFLPLNDQGQLDPSQPLTQDSIYTQTLDDIELLNDAGNQFNLKKIMAGEQTPVFFGSALTNFGVETFLNSFVQYAPEPGPKKTEQGGEVNPTNPEFSAFVFKIQANMNPAHRDRIAFVRIVSGEFERGMDVILHRTGKTMRLNNSTEFMADTRETVSTAVAGDIVGLYDTGNFQIGDTIYQGKEPIQFEKLPQFTPELFVRVTPKNVMKQKSFHKGMQQLVQEGAVQLYKTYNTNDYILGAVGQLQFEVFQFRMLHEYHSEVIMTPIGSRTARWINPDQLDEKMSSSRNLLVQDIHGDPLFLFENQYAERWFADKYPDVKLTAKM</sequence>
<dbReference type="EMBL" id="FM177140">
    <property type="protein sequence ID" value="CAQ67062.1"/>
    <property type="molecule type" value="Genomic_DNA"/>
</dbReference>
<dbReference type="SMR" id="B3WFB1"/>
<dbReference type="KEGG" id="lcb:LCABL_19840"/>
<dbReference type="HOGENOM" id="CLU_002794_2_1_9"/>
<dbReference type="GO" id="GO:0005829">
    <property type="term" value="C:cytosol"/>
    <property type="evidence" value="ECO:0007669"/>
    <property type="project" value="TreeGrafter"/>
</dbReference>
<dbReference type="GO" id="GO:0005525">
    <property type="term" value="F:GTP binding"/>
    <property type="evidence" value="ECO:0007669"/>
    <property type="project" value="UniProtKB-UniRule"/>
</dbReference>
<dbReference type="GO" id="GO:0003924">
    <property type="term" value="F:GTPase activity"/>
    <property type="evidence" value="ECO:0007669"/>
    <property type="project" value="InterPro"/>
</dbReference>
<dbReference type="GO" id="GO:0016150">
    <property type="term" value="F:translation release factor activity, codon nonspecific"/>
    <property type="evidence" value="ECO:0007669"/>
    <property type="project" value="TreeGrafter"/>
</dbReference>
<dbReference type="GO" id="GO:0016149">
    <property type="term" value="F:translation release factor activity, codon specific"/>
    <property type="evidence" value="ECO:0007669"/>
    <property type="project" value="UniProtKB-UniRule"/>
</dbReference>
<dbReference type="GO" id="GO:0006449">
    <property type="term" value="P:regulation of translational termination"/>
    <property type="evidence" value="ECO:0007669"/>
    <property type="project" value="UniProtKB-UniRule"/>
</dbReference>
<dbReference type="CDD" id="cd04169">
    <property type="entry name" value="RF3"/>
    <property type="match status" value="1"/>
</dbReference>
<dbReference type="CDD" id="cd16259">
    <property type="entry name" value="RF3_III"/>
    <property type="match status" value="1"/>
</dbReference>
<dbReference type="FunFam" id="2.40.30.10:FF:000040">
    <property type="entry name" value="Peptide chain release factor 3"/>
    <property type="match status" value="1"/>
</dbReference>
<dbReference type="FunFam" id="3.30.70.3280:FF:000001">
    <property type="entry name" value="Peptide chain release factor 3"/>
    <property type="match status" value="1"/>
</dbReference>
<dbReference type="FunFam" id="3.40.50.300:FF:000542">
    <property type="entry name" value="Peptide chain release factor 3"/>
    <property type="match status" value="1"/>
</dbReference>
<dbReference type="Gene3D" id="3.40.50.300">
    <property type="entry name" value="P-loop containing nucleotide triphosphate hydrolases"/>
    <property type="match status" value="1"/>
</dbReference>
<dbReference type="Gene3D" id="3.30.70.3280">
    <property type="entry name" value="Peptide chain release factor 3, domain III"/>
    <property type="match status" value="1"/>
</dbReference>
<dbReference type="Gene3D" id="2.40.30.10">
    <property type="entry name" value="Translation factors"/>
    <property type="match status" value="1"/>
</dbReference>
<dbReference type="HAMAP" id="MF_00072">
    <property type="entry name" value="Rel_fac_3"/>
    <property type="match status" value="1"/>
</dbReference>
<dbReference type="InterPro" id="IPR053905">
    <property type="entry name" value="EF-G-like_DII"/>
</dbReference>
<dbReference type="InterPro" id="IPR035647">
    <property type="entry name" value="EFG_III/V"/>
</dbReference>
<dbReference type="InterPro" id="IPR031157">
    <property type="entry name" value="G_TR_CS"/>
</dbReference>
<dbReference type="InterPro" id="IPR027417">
    <property type="entry name" value="P-loop_NTPase"/>
</dbReference>
<dbReference type="InterPro" id="IPR004548">
    <property type="entry name" value="PrfC"/>
</dbReference>
<dbReference type="InterPro" id="IPR032090">
    <property type="entry name" value="RF3_C"/>
</dbReference>
<dbReference type="InterPro" id="IPR038467">
    <property type="entry name" value="RF3_dom_3_sf"/>
</dbReference>
<dbReference type="InterPro" id="IPR041732">
    <property type="entry name" value="RF3_GTP-bd"/>
</dbReference>
<dbReference type="InterPro" id="IPR005225">
    <property type="entry name" value="Small_GTP-bd"/>
</dbReference>
<dbReference type="InterPro" id="IPR000795">
    <property type="entry name" value="T_Tr_GTP-bd_dom"/>
</dbReference>
<dbReference type="InterPro" id="IPR009000">
    <property type="entry name" value="Transl_B-barrel_sf"/>
</dbReference>
<dbReference type="NCBIfam" id="TIGR00503">
    <property type="entry name" value="prfC"/>
    <property type="match status" value="1"/>
</dbReference>
<dbReference type="NCBIfam" id="NF001964">
    <property type="entry name" value="PRK00741.1"/>
    <property type="match status" value="1"/>
</dbReference>
<dbReference type="NCBIfam" id="TIGR00231">
    <property type="entry name" value="small_GTP"/>
    <property type="match status" value="1"/>
</dbReference>
<dbReference type="PANTHER" id="PTHR43556">
    <property type="entry name" value="PEPTIDE CHAIN RELEASE FACTOR RF3"/>
    <property type="match status" value="1"/>
</dbReference>
<dbReference type="PANTHER" id="PTHR43556:SF2">
    <property type="entry name" value="PEPTIDE CHAIN RELEASE FACTOR RF3"/>
    <property type="match status" value="1"/>
</dbReference>
<dbReference type="Pfam" id="PF22042">
    <property type="entry name" value="EF-G_D2"/>
    <property type="match status" value="1"/>
</dbReference>
<dbReference type="Pfam" id="PF00009">
    <property type="entry name" value="GTP_EFTU"/>
    <property type="match status" value="1"/>
</dbReference>
<dbReference type="Pfam" id="PF16658">
    <property type="entry name" value="RF3_C"/>
    <property type="match status" value="1"/>
</dbReference>
<dbReference type="PRINTS" id="PR00315">
    <property type="entry name" value="ELONGATNFCT"/>
</dbReference>
<dbReference type="SUPFAM" id="SSF54980">
    <property type="entry name" value="EF-G C-terminal domain-like"/>
    <property type="match status" value="1"/>
</dbReference>
<dbReference type="SUPFAM" id="SSF52540">
    <property type="entry name" value="P-loop containing nucleoside triphosphate hydrolases"/>
    <property type="match status" value="1"/>
</dbReference>
<dbReference type="SUPFAM" id="SSF50447">
    <property type="entry name" value="Translation proteins"/>
    <property type="match status" value="1"/>
</dbReference>
<dbReference type="PROSITE" id="PS00301">
    <property type="entry name" value="G_TR_1"/>
    <property type="match status" value="1"/>
</dbReference>
<dbReference type="PROSITE" id="PS51722">
    <property type="entry name" value="G_TR_2"/>
    <property type="match status" value="1"/>
</dbReference>
<name>RF3_LACCB</name>
<organism>
    <name type="scientific">Lacticaseibacillus casei (strain BL23)</name>
    <name type="common">Lactobacillus casei</name>
    <dbReference type="NCBI Taxonomy" id="543734"/>
    <lineage>
        <taxon>Bacteria</taxon>
        <taxon>Bacillati</taxon>
        <taxon>Bacillota</taxon>
        <taxon>Bacilli</taxon>
        <taxon>Lactobacillales</taxon>
        <taxon>Lactobacillaceae</taxon>
        <taxon>Lacticaseibacillus</taxon>
    </lineage>
</organism>
<feature type="chain" id="PRO_1000092487" description="Peptide chain release factor 3">
    <location>
        <begin position="1"/>
        <end position="524"/>
    </location>
</feature>
<feature type="domain" description="tr-type G">
    <location>
        <begin position="11"/>
        <end position="278"/>
    </location>
</feature>
<feature type="binding site" evidence="1">
    <location>
        <begin position="20"/>
        <end position="27"/>
    </location>
    <ligand>
        <name>GTP</name>
        <dbReference type="ChEBI" id="CHEBI:37565"/>
    </ligand>
</feature>
<feature type="binding site" evidence="1">
    <location>
        <begin position="88"/>
        <end position="92"/>
    </location>
    <ligand>
        <name>GTP</name>
        <dbReference type="ChEBI" id="CHEBI:37565"/>
    </ligand>
</feature>
<feature type="binding site" evidence="1">
    <location>
        <begin position="142"/>
        <end position="145"/>
    </location>
    <ligand>
        <name>GTP</name>
        <dbReference type="ChEBI" id="CHEBI:37565"/>
    </ligand>
</feature>
<accession>B3WFB1</accession>
<evidence type="ECO:0000255" key="1">
    <source>
        <dbReference type="HAMAP-Rule" id="MF_00072"/>
    </source>
</evidence>
<reference key="1">
    <citation type="submission" date="2008-06" db="EMBL/GenBank/DDBJ databases">
        <title>Lactobacillus casei BL23 complete genome sequence.</title>
        <authorList>
            <person name="Maze A."/>
            <person name="Boel G."/>
            <person name="Bourand A."/>
            <person name="Loux V."/>
            <person name="Gibrat J.F."/>
            <person name="Zuniga M."/>
            <person name="Hartke A."/>
            <person name="Deutscher J."/>
        </authorList>
    </citation>
    <scope>NUCLEOTIDE SEQUENCE [LARGE SCALE GENOMIC DNA]</scope>
    <source>
        <strain>BL23</strain>
    </source>
</reference>
<gene>
    <name evidence="1" type="primary">prfC</name>
    <name type="ordered locus">LCABL_19840</name>
</gene>
<keyword id="KW-0963">Cytoplasm</keyword>
<keyword id="KW-0342">GTP-binding</keyword>
<keyword id="KW-0547">Nucleotide-binding</keyword>
<keyword id="KW-0648">Protein biosynthesis</keyword>
<comment type="function">
    <text evidence="1">Increases the formation of ribosomal termination complexes and stimulates activities of RF-1 and RF-2. It binds guanine nucleotides and has strong preference for UGA stop codons. It may interact directly with the ribosome. The stimulation of RF-1 and RF-2 is significantly reduced by GTP and GDP, but not by GMP.</text>
</comment>
<comment type="subcellular location">
    <subcellularLocation>
        <location evidence="1">Cytoplasm</location>
    </subcellularLocation>
</comment>
<comment type="similarity">
    <text evidence="1">Belongs to the TRAFAC class translation factor GTPase superfamily. Classic translation factor GTPase family. PrfC subfamily.</text>
</comment>
<proteinExistence type="inferred from homology"/>
<protein>
    <recommendedName>
        <fullName evidence="1">Peptide chain release factor 3</fullName>
        <shortName evidence="1">RF-3</shortName>
    </recommendedName>
</protein>